<gene>
    <name type="ordered locus">Rv0004</name>
    <name type="ORF">MTCY10H4.02</name>
</gene>
<keyword id="KW-1185">Reference proteome</keyword>
<name>Y004_MYCTU</name>
<comment type="similarity">
    <text evidence="2">Belongs to the UPF0232 family.</text>
</comment>
<proteinExistence type="inferred from homology"/>
<feature type="chain" id="PRO_0000211365" description="UPF0232 protein Rv0004">
    <location>
        <begin position="1"/>
        <end position="187"/>
    </location>
</feature>
<feature type="region of interest" description="Disordered" evidence="1">
    <location>
        <begin position="1"/>
        <end position="75"/>
    </location>
</feature>
<feature type="region of interest" description="Disordered" evidence="1">
    <location>
        <begin position="168"/>
        <end position="187"/>
    </location>
</feature>
<feature type="compositionally biased region" description="Basic and acidic residues" evidence="1">
    <location>
        <begin position="1"/>
        <end position="17"/>
    </location>
</feature>
<feature type="compositionally biased region" description="Basic and acidic residues" evidence="1">
    <location>
        <begin position="24"/>
        <end position="45"/>
    </location>
</feature>
<feature type="sequence conflict" description="In Ref. 1; CAA63260." evidence="2" ref="1">
    <original>AL</original>
    <variation>VI</variation>
    <location>
        <begin position="118"/>
        <end position="119"/>
    </location>
</feature>
<feature type="sequence conflict" description="In Ref. 1; CAA63260." evidence="2" ref="1">
    <original>A</original>
    <variation>E</variation>
    <location>
        <position position="128"/>
    </location>
</feature>
<feature type="sequence conflict" description="In Ref. 1; CAA63260." evidence="2" ref="1">
    <original>A</original>
    <variation>V</variation>
    <location>
        <position position="132"/>
    </location>
</feature>
<dbReference type="EMBL" id="X92504">
    <property type="protein sequence ID" value="CAA63260.1"/>
    <property type="molecule type" value="Genomic_DNA"/>
</dbReference>
<dbReference type="EMBL" id="AL123456">
    <property type="protein sequence ID" value="CCP42726.1"/>
    <property type="molecule type" value="Genomic_DNA"/>
</dbReference>
<dbReference type="PIR" id="B70698">
    <property type="entry name" value="B70698"/>
</dbReference>
<dbReference type="RefSeq" id="NP_214518.1">
    <property type="nucleotide sequence ID" value="NC_000962.3"/>
</dbReference>
<dbReference type="RefSeq" id="WP_003899769.1">
    <property type="nucleotide sequence ID" value="NZ_NVQJ01000005.1"/>
</dbReference>
<dbReference type="SMR" id="P9WFL1"/>
<dbReference type="STRING" id="83332.Rv0004"/>
<dbReference type="PaxDb" id="83332-Rv0004"/>
<dbReference type="DNASU" id="887088"/>
<dbReference type="GeneID" id="887088"/>
<dbReference type="KEGG" id="mtu:Rv0004"/>
<dbReference type="KEGG" id="mtv:RVBD_0004"/>
<dbReference type="TubercuList" id="Rv0004"/>
<dbReference type="eggNOG" id="COG5512">
    <property type="taxonomic scope" value="Bacteria"/>
</dbReference>
<dbReference type="InParanoid" id="P9WFL1"/>
<dbReference type="OrthoDB" id="5516926at2"/>
<dbReference type="PhylomeDB" id="P9WFL1"/>
<dbReference type="Proteomes" id="UP000001584">
    <property type="component" value="Chromosome"/>
</dbReference>
<dbReference type="HAMAP" id="MF_00630">
    <property type="entry name" value="UPF0232"/>
    <property type="match status" value="1"/>
</dbReference>
<dbReference type="InterPro" id="IPR007922">
    <property type="entry name" value="DciA-like"/>
</dbReference>
<dbReference type="InterPro" id="IPR023007">
    <property type="entry name" value="UPF0232_actinobac"/>
</dbReference>
<dbReference type="NCBIfam" id="NF002871">
    <property type="entry name" value="PRK03195.1"/>
    <property type="match status" value="1"/>
</dbReference>
<dbReference type="PANTHER" id="PTHR36456">
    <property type="entry name" value="UPF0232 PROTEIN SCO3875"/>
    <property type="match status" value="1"/>
</dbReference>
<dbReference type="PANTHER" id="PTHR36456:SF1">
    <property type="entry name" value="UPF0232 PROTEIN SCO3875"/>
    <property type="match status" value="1"/>
</dbReference>
<dbReference type="Pfam" id="PF05258">
    <property type="entry name" value="DciA"/>
    <property type="match status" value="1"/>
</dbReference>
<sequence>MTGSVDRPDQNRGERSMKSPGLDLVRRTLDEARAAARARGQDAGRGRVASVASGRVAGRRRSWSGPGPDIRDPQPLGKAARELAKKRGWSVRVAEGMVLGQWSAVVGHQIAEHARPTALNDGVLSVIAESTAWATQLRIMQAQLLAKIAAAVGNDVVRSLKITGPAAPSWRKGPRHIAGRGPRDTYG</sequence>
<protein>
    <recommendedName>
        <fullName>UPF0232 protein Rv0004</fullName>
    </recommendedName>
</protein>
<organism>
    <name type="scientific">Mycobacterium tuberculosis (strain ATCC 25618 / H37Rv)</name>
    <dbReference type="NCBI Taxonomy" id="83332"/>
    <lineage>
        <taxon>Bacteria</taxon>
        <taxon>Bacillati</taxon>
        <taxon>Actinomycetota</taxon>
        <taxon>Actinomycetes</taxon>
        <taxon>Mycobacteriales</taxon>
        <taxon>Mycobacteriaceae</taxon>
        <taxon>Mycobacterium</taxon>
        <taxon>Mycobacterium tuberculosis complex</taxon>
    </lineage>
</organism>
<accession>P9WFL1</accession>
<accession>L0T5E6</accession>
<accession>P71573</accession>
<accession>Q50791</accession>
<reference key="1">
    <citation type="journal article" date="1996" name="Mol. Microbiol.">
        <title>Organization of the origins of replication of the chromosomes of Mycobacterium smegmatis, Mycobacterium leprae and Mycobacterium tuberculosis and isolation of a functional origin from M. smegmatis.</title>
        <authorList>
            <person name="Salazar L."/>
            <person name="Fsihi H."/>
            <person name="De Rossi E."/>
            <person name="Riccardi G."/>
            <person name="Rios C."/>
            <person name="Cole S.T."/>
            <person name="Takiff H.E."/>
        </authorList>
    </citation>
    <scope>NUCLEOTIDE SEQUENCE [GENOMIC DNA]</scope>
    <source>
        <strain>ATCC 25618 / H37Rv</strain>
    </source>
</reference>
<reference key="2">
    <citation type="journal article" date="1998" name="Nature">
        <title>Deciphering the biology of Mycobacterium tuberculosis from the complete genome sequence.</title>
        <authorList>
            <person name="Cole S.T."/>
            <person name="Brosch R."/>
            <person name="Parkhill J."/>
            <person name="Garnier T."/>
            <person name="Churcher C.M."/>
            <person name="Harris D.E."/>
            <person name="Gordon S.V."/>
            <person name="Eiglmeier K."/>
            <person name="Gas S."/>
            <person name="Barry C.E. III"/>
            <person name="Tekaia F."/>
            <person name="Badcock K."/>
            <person name="Basham D."/>
            <person name="Brown D."/>
            <person name="Chillingworth T."/>
            <person name="Connor R."/>
            <person name="Davies R.M."/>
            <person name="Devlin K."/>
            <person name="Feltwell T."/>
            <person name="Gentles S."/>
            <person name="Hamlin N."/>
            <person name="Holroyd S."/>
            <person name="Hornsby T."/>
            <person name="Jagels K."/>
            <person name="Krogh A."/>
            <person name="McLean J."/>
            <person name="Moule S."/>
            <person name="Murphy L.D."/>
            <person name="Oliver S."/>
            <person name="Osborne J."/>
            <person name="Quail M.A."/>
            <person name="Rajandream M.A."/>
            <person name="Rogers J."/>
            <person name="Rutter S."/>
            <person name="Seeger K."/>
            <person name="Skelton S."/>
            <person name="Squares S."/>
            <person name="Squares R."/>
            <person name="Sulston J.E."/>
            <person name="Taylor K."/>
            <person name="Whitehead S."/>
            <person name="Barrell B.G."/>
        </authorList>
    </citation>
    <scope>NUCLEOTIDE SEQUENCE [LARGE SCALE GENOMIC DNA]</scope>
    <source>
        <strain>ATCC 25618 / H37Rv</strain>
    </source>
</reference>
<evidence type="ECO:0000256" key="1">
    <source>
        <dbReference type="SAM" id="MobiDB-lite"/>
    </source>
</evidence>
<evidence type="ECO:0000305" key="2"/>